<reference key="1">
    <citation type="journal article" date="2000" name="Nature">
        <title>Genome sequence of the endocellular bacterial symbiont of aphids Buchnera sp. APS.</title>
        <authorList>
            <person name="Shigenobu S."/>
            <person name="Watanabe H."/>
            <person name="Hattori M."/>
            <person name="Sakaki Y."/>
            <person name="Ishikawa H."/>
        </authorList>
    </citation>
    <scope>NUCLEOTIDE SEQUENCE [LARGE SCALE GENOMIC DNA]</scope>
    <source>
        <strain>APS</strain>
    </source>
</reference>
<keyword id="KW-1003">Cell membrane</keyword>
<keyword id="KW-0472">Membrane</keyword>
<keyword id="KW-1185">Reference proteome</keyword>
<keyword id="KW-0812">Transmembrane</keyword>
<keyword id="KW-1133">Transmembrane helix</keyword>
<evidence type="ECO:0000255" key="1"/>
<evidence type="ECO:0000305" key="2"/>
<gene>
    <name type="ordered locus">BU267</name>
</gene>
<organism>
    <name type="scientific">Buchnera aphidicola subsp. Acyrthosiphon pisum (strain APS)</name>
    <name type="common">Acyrthosiphon pisum symbiotic bacterium</name>
    <dbReference type="NCBI Taxonomy" id="107806"/>
    <lineage>
        <taxon>Bacteria</taxon>
        <taxon>Pseudomonadati</taxon>
        <taxon>Pseudomonadota</taxon>
        <taxon>Gammaproteobacteria</taxon>
        <taxon>Enterobacterales</taxon>
        <taxon>Erwiniaceae</taxon>
        <taxon>Buchnera</taxon>
    </lineage>
</organism>
<name>Y267_BUCAI</name>
<protein>
    <recommendedName>
        <fullName>UPF0056 membrane protein BU267</fullName>
    </recommendedName>
</protein>
<comment type="subcellular location">
    <subcellularLocation>
        <location evidence="2">Cell membrane</location>
        <topology evidence="2">Multi-pass membrane protein</topology>
    </subcellularLocation>
</comment>
<comment type="similarity">
    <text evidence="2">Belongs to the UPF0056 (MarC) family.</text>
</comment>
<proteinExistence type="inferred from homology"/>
<sequence length="215" mass="23613">MNISIFDLSIYIKFFIGLCALVNPIGMIPIFTTMTNNQSFLERKKTNIVANFSVSLILLISLFFGSNILNIFGISINSFRIAGGILIISIAFSMISGQFIKTIKTKKETKEENKIDNISVVPLAMPLIAGPGAISSTIVWSTYYSSWANLFLCSLVIFLFSFVCWLCFEAAPYVVQILGNTGINIITRIMGLLLMSLGIEFISTGIGAIFPGLLH</sequence>
<feature type="chain" id="PRO_0000156907" description="UPF0056 membrane protein BU267">
    <location>
        <begin position="1"/>
        <end position="215"/>
    </location>
</feature>
<feature type="transmembrane region" description="Helical" evidence="1">
    <location>
        <begin position="14"/>
        <end position="34"/>
    </location>
</feature>
<feature type="transmembrane region" description="Helical" evidence="1">
    <location>
        <begin position="56"/>
        <end position="76"/>
    </location>
</feature>
<feature type="transmembrane region" description="Helical" evidence="1">
    <location>
        <begin position="81"/>
        <end position="101"/>
    </location>
</feature>
<feature type="transmembrane region" description="Helical" evidence="1">
    <location>
        <begin position="120"/>
        <end position="140"/>
    </location>
</feature>
<feature type="transmembrane region" description="Helical" evidence="1">
    <location>
        <begin position="150"/>
        <end position="170"/>
    </location>
</feature>
<feature type="transmembrane region" description="Helical" evidence="1">
    <location>
        <begin position="189"/>
        <end position="209"/>
    </location>
</feature>
<dbReference type="EMBL" id="BA000003">
    <property type="protein sequence ID" value="BAB12977.1"/>
    <property type="molecule type" value="Genomic_DNA"/>
</dbReference>
<dbReference type="RefSeq" id="NP_240091.1">
    <property type="nucleotide sequence ID" value="NC_002528.1"/>
</dbReference>
<dbReference type="RefSeq" id="WP_010896035.1">
    <property type="nucleotide sequence ID" value="NC_002528.1"/>
</dbReference>
<dbReference type="STRING" id="563178.BUAP5A_262"/>
<dbReference type="EnsemblBacteria" id="BAB12977">
    <property type="protein sequence ID" value="BAB12977"/>
    <property type="gene ID" value="BAB12977"/>
</dbReference>
<dbReference type="KEGG" id="buc:BU267"/>
<dbReference type="PATRIC" id="fig|107806.10.peg.277"/>
<dbReference type="eggNOG" id="COG2095">
    <property type="taxonomic scope" value="Bacteria"/>
</dbReference>
<dbReference type="HOGENOM" id="CLU_079909_2_1_6"/>
<dbReference type="BioCyc" id="BAPH107806:GBZJ-262-MONOMER"/>
<dbReference type="Proteomes" id="UP000001806">
    <property type="component" value="Chromosome"/>
</dbReference>
<dbReference type="GO" id="GO:0005886">
    <property type="term" value="C:plasma membrane"/>
    <property type="evidence" value="ECO:0007669"/>
    <property type="project" value="UniProtKB-SubCell"/>
</dbReference>
<dbReference type="InterPro" id="IPR002771">
    <property type="entry name" value="Multi_antbiot-R_MarC"/>
</dbReference>
<dbReference type="NCBIfam" id="TIGR00427">
    <property type="entry name" value="NAAT family transporter"/>
    <property type="match status" value="1"/>
</dbReference>
<dbReference type="NCBIfam" id="NF008320">
    <property type="entry name" value="PRK11111.1"/>
    <property type="match status" value="1"/>
</dbReference>
<dbReference type="PANTHER" id="PTHR33508">
    <property type="entry name" value="UPF0056 MEMBRANE PROTEIN YHCE"/>
    <property type="match status" value="1"/>
</dbReference>
<dbReference type="PANTHER" id="PTHR33508:SF1">
    <property type="entry name" value="UPF0056 MEMBRANE PROTEIN YHCE"/>
    <property type="match status" value="1"/>
</dbReference>
<dbReference type="Pfam" id="PF01914">
    <property type="entry name" value="MarC"/>
    <property type="match status" value="1"/>
</dbReference>
<accession>P57355</accession>